<reference key="1">
    <citation type="journal article" date="2009" name="Appl. Environ. Microbiol.">
        <title>Three genomes from the phylum Acidobacteria provide insight into the lifestyles of these microorganisms in soils.</title>
        <authorList>
            <person name="Ward N.L."/>
            <person name="Challacombe J.F."/>
            <person name="Janssen P.H."/>
            <person name="Henrissat B."/>
            <person name="Coutinho P.M."/>
            <person name="Wu M."/>
            <person name="Xie G."/>
            <person name="Haft D.H."/>
            <person name="Sait M."/>
            <person name="Badger J."/>
            <person name="Barabote R.D."/>
            <person name="Bradley B."/>
            <person name="Brettin T.S."/>
            <person name="Brinkac L.M."/>
            <person name="Bruce D."/>
            <person name="Creasy T."/>
            <person name="Daugherty S.C."/>
            <person name="Davidsen T.M."/>
            <person name="DeBoy R.T."/>
            <person name="Detter J.C."/>
            <person name="Dodson R.J."/>
            <person name="Durkin A.S."/>
            <person name="Ganapathy A."/>
            <person name="Gwinn-Giglio M."/>
            <person name="Han C.S."/>
            <person name="Khouri H."/>
            <person name="Kiss H."/>
            <person name="Kothari S.P."/>
            <person name="Madupu R."/>
            <person name="Nelson K.E."/>
            <person name="Nelson W.C."/>
            <person name="Paulsen I."/>
            <person name="Penn K."/>
            <person name="Ren Q."/>
            <person name="Rosovitz M.J."/>
            <person name="Selengut J.D."/>
            <person name="Shrivastava S."/>
            <person name="Sullivan S.A."/>
            <person name="Tapia R."/>
            <person name="Thompson L.S."/>
            <person name="Watkins K.L."/>
            <person name="Yang Q."/>
            <person name="Yu C."/>
            <person name="Zafar N."/>
            <person name="Zhou L."/>
            <person name="Kuske C.R."/>
        </authorList>
    </citation>
    <scope>NUCLEOTIDE SEQUENCE [LARGE SCALE GENOMIC DNA]</scope>
    <source>
        <strain>Ellin345</strain>
    </source>
</reference>
<sequence length="381" mass="41207">MADAVILGIESSCDETAAAVIRNGAEILSSVVFSQIYTHMRYGGVVPELASREHLKAIVPVVRQAVEDAGQSYDKIDAIAVTRGPGLAGALLVGVSYAKALSFALDKPLIGVNHLEGHIHVVLLEQKQQGVGEIQFPVLALVVSGGHTHLYLAEKKDAGWTYRDVGHTRDDAAGEAYDKVAKLLGLGYPGGPILDGLAKHGDPRAVRFPFAQIKHRDRNPQNRHEDDDARVDFSYSGIKTAVLRYVETHEMKAAIEARRTALKEIEKPSQDDYLRVCDRQTLDLIASFQRAVVNDLVSKALHAAAENNAATLLVTGGVAANSELRETFERRAGELGLPVYFPSRPLSTDNAAMIAAAAYPRFLSGEFAAPDLSAEANLRLR</sequence>
<feature type="chain" id="PRO_0000303241" description="tRNA N6-adenosine threonylcarbamoyltransferase">
    <location>
        <begin position="1"/>
        <end position="381"/>
    </location>
</feature>
<feature type="binding site" evidence="1">
    <location>
        <position position="114"/>
    </location>
    <ligand>
        <name>Fe cation</name>
        <dbReference type="ChEBI" id="CHEBI:24875"/>
    </ligand>
</feature>
<feature type="binding site" evidence="1">
    <location>
        <position position="118"/>
    </location>
    <ligand>
        <name>Fe cation</name>
        <dbReference type="ChEBI" id="CHEBI:24875"/>
    </ligand>
</feature>
<feature type="binding site" evidence="1">
    <location>
        <begin position="142"/>
        <end position="146"/>
    </location>
    <ligand>
        <name>substrate</name>
    </ligand>
</feature>
<feature type="binding site" evidence="1">
    <location>
        <position position="178"/>
    </location>
    <ligand>
        <name>substrate</name>
    </ligand>
</feature>
<feature type="binding site" evidence="1">
    <location>
        <position position="191"/>
    </location>
    <ligand>
        <name>substrate</name>
    </ligand>
</feature>
<feature type="binding site" evidence="1">
    <location>
        <position position="195"/>
    </location>
    <ligand>
        <name>substrate</name>
    </ligand>
</feature>
<feature type="binding site" evidence="1">
    <location>
        <position position="321"/>
    </location>
    <ligand>
        <name>substrate</name>
    </ligand>
</feature>
<feature type="binding site" evidence="1">
    <location>
        <position position="349"/>
    </location>
    <ligand>
        <name>Fe cation</name>
        <dbReference type="ChEBI" id="CHEBI:24875"/>
    </ligand>
</feature>
<keyword id="KW-0012">Acyltransferase</keyword>
<keyword id="KW-0963">Cytoplasm</keyword>
<keyword id="KW-0408">Iron</keyword>
<keyword id="KW-0479">Metal-binding</keyword>
<keyword id="KW-1185">Reference proteome</keyword>
<keyword id="KW-0808">Transferase</keyword>
<keyword id="KW-0819">tRNA processing</keyword>
<dbReference type="EC" id="2.3.1.234" evidence="1"/>
<dbReference type="EMBL" id="CP000360">
    <property type="protein sequence ID" value="ABF39499.1"/>
    <property type="molecule type" value="Genomic_DNA"/>
</dbReference>
<dbReference type="RefSeq" id="WP_011521301.1">
    <property type="nucleotide sequence ID" value="NC_008009.1"/>
</dbReference>
<dbReference type="SMR" id="Q1IUF1"/>
<dbReference type="STRING" id="204669.Acid345_0494"/>
<dbReference type="EnsemblBacteria" id="ABF39499">
    <property type="protein sequence ID" value="ABF39499"/>
    <property type="gene ID" value="Acid345_0494"/>
</dbReference>
<dbReference type="KEGG" id="aba:Acid345_0494"/>
<dbReference type="eggNOG" id="COG0533">
    <property type="taxonomic scope" value="Bacteria"/>
</dbReference>
<dbReference type="HOGENOM" id="CLU_023208_0_2_0"/>
<dbReference type="OrthoDB" id="9806197at2"/>
<dbReference type="Proteomes" id="UP000002432">
    <property type="component" value="Chromosome"/>
</dbReference>
<dbReference type="GO" id="GO:0005737">
    <property type="term" value="C:cytoplasm"/>
    <property type="evidence" value="ECO:0007669"/>
    <property type="project" value="UniProtKB-SubCell"/>
</dbReference>
<dbReference type="GO" id="GO:0005506">
    <property type="term" value="F:iron ion binding"/>
    <property type="evidence" value="ECO:0007669"/>
    <property type="project" value="UniProtKB-UniRule"/>
</dbReference>
<dbReference type="GO" id="GO:0061711">
    <property type="term" value="F:N(6)-L-threonylcarbamoyladenine synthase activity"/>
    <property type="evidence" value="ECO:0007669"/>
    <property type="project" value="UniProtKB-EC"/>
</dbReference>
<dbReference type="GO" id="GO:0002949">
    <property type="term" value="P:tRNA threonylcarbamoyladenosine modification"/>
    <property type="evidence" value="ECO:0007669"/>
    <property type="project" value="UniProtKB-UniRule"/>
</dbReference>
<dbReference type="CDD" id="cd24133">
    <property type="entry name" value="ASKHA_NBD_TsaD_bac"/>
    <property type="match status" value="1"/>
</dbReference>
<dbReference type="FunFam" id="3.30.420.40:FF:000012">
    <property type="entry name" value="tRNA N6-adenosine threonylcarbamoyltransferase"/>
    <property type="match status" value="1"/>
</dbReference>
<dbReference type="Gene3D" id="3.30.420.40">
    <property type="match status" value="2"/>
</dbReference>
<dbReference type="HAMAP" id="MF_01445">
    <property type="entry name" value="TsaD"/>
    <property type="match status" value="1"/>
</dbReference>
<dbReference type="InterPro" id="IPR043129">
    <property type="entry name" value="ATPase_NBD"/>
</dbReference>
<dbReference type="InterPro" id="IPR000905">
    <property type="entry name" value="Gcp-like_dom"/>
</dbReference>
<dbReference type="InterPro" id="IPR017861">
    <property type="entry name" value="KAE1/TsaD"/>
</dbReference>
<dbReference type="InterPro" id="IPR017860">
    <property type="entry name" value="Peptidase_M22_CS"/>
</dbReference>
<dbReference type="InterPro" id="IPR022450">
    <property type="entry name" value="TsaD"/>
</dbReference>
<dbReference type="NCBIfam" id="TIGR00329">
    <property type="entry name" value="gcp_kae1"/>
    <property type="match status" value="1"/>
</dbReference>
<dbReference type="NCBIfam" id="TIGR03723">
    <property type="entry name" value="T6A_TsaD_YgjD"/>
    <property type="match status" value="1"/>
</dbReference>
<dbReference type="PANTHER" id="PTHR11735">
    <property type="entry name" value="TRNA N6-ADENOSINE THREONYLCARBAMOYLTRANSFERASE"/>
    <property type="match status" value="1"/>
</dbReference>
<dbReference type="PANTHER" id="PTHR11735:SF6">
    <property type="entry name" value="TRNA N6-ADENOSINE THREONYLCARBAMOYLTRANSFERASE, MITOCHONDRIAL"/>
    <property type="match status" value="1"/>
</dbReference>
<dbReference type="Pfam" id="PF00814">
    <property type="entry name" value="TsaD"/>
    <property type="match status" value="1"/>
</dbReference>
<dbReference type="PRINTS" id="PR00789">
    <property type="entry name" value="OSIALOPTASE"/>
</dbReference>
<dbReference type="SUPFAM" id="SSF53067">
    <property type="entry name" value="Actin-like ATPase domain"/>
    <property type="match status" value="1"/>
</dbReference>
<dbReference type="PROSITE" id="PS01016">
    <property type="entry name" value="GLYCOPROTEASE"/>
    <property type="match status" value="1"/>
</dbReference>
<organism>
    <name type="scientific">Koribacter versatilis (strain Ellin345)</name>
    <dbReference type="NCBI Taxonomy" id="204669"/>
    <lineage>
        <taxon>Bacteria</taxon>
        <taxon>Pseudomonadati</taxon>
        <taxon>Acidobacteriota</taxon>
        <taxon>Terriglobia</taxon>
        <taxon>Terriglobales</taxon>
        <taxon>Candidatus Korobacteraceae</taxon>
        <taxon>Candidatus Korobacter</taxon>
    </lineage>
</organism>
<evidence type="ECO:0000255" key="1">
    <source>
        <dbReference type="HAMAP-Rule" id="MF_01445"/>
    </source>
</evidence>
<comment type="function">
    <text evidence="1">Required for the formation of a threonylcarbamoyl group on adenosine at position 37 (t(6)A37) in tRNAs that read codons beginning with adenine. Is involved in the transfer of the threonylcarbamoyl moiety of threonylcarbamoyl-AMP (TC-AMP) to the N6 group of A37, together with TsaE and TsaB. TsaD likely plays a direct catalytic role in this reaction.</text>
</comment>
<comment type="catalytic activity">
    <reaction evidence="1">
        <text>L-threonylcarbamoyladenylate + adenosine(37) in tRNA = N(6)-L-threonylcarbamoyladenosine(37) in tRNA + AMP + H(+)</text>
        <dbReference type="Rhea" id="RHEA:37059"/>
        <dbReference type="Rhea" id="RHEA-COMP:10162"/>
        <dbReference type="Rhea" id="RHEA-COMP:10163"/>
        <dbReference type="ChEBI" id="CHEBI:15378"/>
        <dbReference type="ChEBI" id="CHEBI:73682"/>
        <dbReference type="ChEBI" id="CHEBI:74411"/>
        <dbReference type="ChEBI" id="CHEBI:74418"/>
        <dbReference type="ChEBI" id="CHEBI:456215"/>
        <dbReference type="EC" id="2.3.1.234"/>
    </reaction>
</comment>
<comment type="cofactor">
    <cofactor evidence="1">
        <name>Fe(2+)</name>
        <dbReference type="ChEBI" id="CHEBI:29033"/>
    </cofactor>
    <text evidence="1">Binds 1 Fe(2+) ion per subunit.</text>
</comment>
<comment type="subcellular location">
    <subcellularLocation>
        <location evidence="1">Cytoplasm</location>
    </subcellularLocation>
</comment>
<comment type="similarity">
    <text evidence="1">Belongs to the KAE1 / TsaD family.</text>
</comment>
<accession>Q1IUF1</accession>
<proteinExistence type="inferred from homology"/>
<name>TSAD_KORVE</name>
<gene>
    <name evidence="1" type="primary">tsaD</name>
    <name type="synonym">gcp</name>
    <name type="ordered locus">Acid345_0494</name>
</gene>
<protein>
    <recommendedName>
        <fullName evidence="1">tRNA N6-adenosine threonylcarbamoyltransferase</fullName>
        <ecNumber evidence="1">2.3.1.234</ecNumber>
    </recommendedName>
    <alternativeName>
        <fullName evidence="1">N6-L-threonylcarbamoyladenine synthase</fullName>
        <shortName evidence="1">t(6)A synthase</shortName>
    </alternativeName>
    <alternativeName>
        <fullName evidence="1">t(6)A37 threonylcarbamoyladenosine biosynthesis protein TsaD</fullName>
    </alternativeName>
    <alternativeName>
        <fullName evidence="1">tRNA threonylcarbamoyladenosine biosynthesis protein TsaD</fullName>
    </alternativeName>
</protein>